<organism>
    <name type="scientific">Gallus gallus</name>
    <name type="common">Chicken</name>
    <dbReference type="NCBI Taxonomy" id="9031"/>
    <lineage>
        <taxon>Eukaryota</taxon>
        <taxon>Metazoa</taxon>
        <taxon>Chordata</taxon>
        <taxon>Craniata</taxon>
        <taxon>Vertebrata</taxon>
        <taxon>Euteleostomi</taxon>
        <taxon>Archelosauria</taxon>
        <taxon>Archosauria</taxon>
        <taxon>Dinosauria</taxon>
        <taxon>Saurischia</taxon>
        <taxon>Theropoda</taxon>
        <taxon>Coelurosauria</taxon>
        <taxon>Aves</taxon>
        <taxon>Neognathae</taxon>
        <taxon>Galloanserae</taxon>
        <taxon>Galliformes</taxon>
        <taxon>Phasianidae</taxon>
        <taxon>Phasianinae</taxon>
        <taxon>Gallus</taxon>
    </lineage>
</organism>
<name>RNL2_CHICK</name>
<reference key="1">
    <citation type="journal article" date="1993" name="J. Biochem.">
        <title>Characterization of poly C preferential ribonuclease from chicken liver.</title>
        <authorList>
            <person name="Hayano K."/>
            <person name="Iwama M."/>
            <person name="Sakamoto H."/>
            <person name="Watanabe H."/>
            <person name="Sanda A."/>
            <person name="Ohgi K."/>
            <person name="Irie M."/>
        </authorList>
    </citation>
    <scope>PROTEIN SEQUENCE</scope>
    <source>
        <tissue>Liver</tissue>
    </source>
</reference>
<feature type="chain" id="PRO_0000057164" description="Ribonuclease CL2">
    <location>
        <begin position="1"/>
        <end position="121"/>
    </location>
</feature>
<feature type="active site" description="Proton acceptor" evidence="1">
    <location>
        <position position="11"/>
    </location>
</feature>
<feature type="active site" description="Proton donor" evidence="1">
    <location>
        <position position="114"/>
    </location>
</feature>
<feature type="binding site" evidence="1">
    <location>
        <position position="6"/>
    </location>
    <ligand>
        <name>substrate</name>
    </ligand>
</feature>
<feature type="binding site" evidence="1">
    <location>
        <position position="9"/>
    </location>
    <ligand>
        <name>substrate</name>
    </ligand>
</feature>
<feature type="binding site" evidence="1">
    <location>
        <begin position="43"/>
        <end position="47"/>
    </location>
    <ligand>
        <name>substrate</name>
    </ligand>
</feature>
<feature type="binding site" evidence="1">
    <location>
        <position position="82"/>
    </location>
    <ligand>
        <name>substrate</name>
    </ligand>
</feature>
<feature type="disulfide bond" evidence="1">
    <location>
        <begin position="26"/>
        <end position="81"/>
    </location>
</feature>
<feature type="disulfide bond" evidence="1">
    <location>
        <begin position="42"/>
        <end position="92"/>
    </location>
</feature>
<feature type="disulfide bond" evidence="1">
    <location>
        <begin position="60"/>
        <end position="107"/>
    </location>
</feature>
<comment type="function">
    <text>Pyrimidine-specific nuclease with preference for C.</text>
</comment>
<comment type="subcellular location">
    <subcellularLocation>
        <location>Secreted</location>
    </subcellularLocation>
</comment>
<comment type="similarity">
    <text evidence="2">Belongs to the pancreatic ribonuclease family.</text>
</comment>
<evidence type="ECO:0000250" key="1"/>
<evidence type="ECO:0000305" key="2"/>
<protein>
    <recommendedName>
        <fullName>Ribonuclease CL2</fullName>
        <shortName>RNase CL2</shortName>
        <ecNumber>3.1.27.-</ecNumber>
    </recommendedName>
    <alternativeName>
        <fullName>Poly C preferential ribonuclease</fullName>
    </alternativeName>
</protein>
<accession>P81476</accession>
<keyword id="KW-0903">Direct protein sequencing</keyword>
<keyword id="KW-1015">Disulfide bond</keyword>
<keyword id="KW-0255">Endonuclease</keyword>
<keyword id="KW-0378">Hydrolase</keyword>
<keyword id="KW-0540">Nuclease</keyword>
<keyword id="KW-1185">Reference proteome</keyword>
<keyword id="KW-0964">Secreted</keyword>
<proteinExistence type="evidence at protein level"/>
<sequence length="121" mass="13433">ETRYEKFLRQHVDHPRTLGLMGHRYCAVMLARRQVTAPGRPCKPSNTFVHAPAEDLVATCTRPADATGFHSTSTPMDITACRLRGGDTRPPCNYRARQLHHHVRVSCLDGLPVHLAGTHAS</sequence>
<dbReference type="EC" id="3.1.27.-"/>
<dbReference type="PIR" id="JX0279">
    <property type="entry name" value="JX0279"/>
</dbReference>
<dbReference type="SMR" id="P81476"/>
<dbReference type="FunCoup" id="P81476">
    <property type="interactions" value="23"/>
</dbReference>
<dbReference type="STRING" id="9031.ENSGALP00000031533"/>
<dbReference type="PaxDb" id="9031-ENSGALP00000031533"/>
<dbReference type="VEuPathDB" id="HostDB:geneid_422633"/>
<dbReference type="eggNOG" id="ENOG502S9Q1">
    <property type="taxonomic scope" value="Eukaryota"/>
</dbReference>
<dbReference type="HOGENOM" id="CLU_117006_3_1_1"/>
<dbReference type="InParanoid" id="P81476"/>
<dbReference type="Proteomes" id="UP000000539">
    <property type="component" value="Unassembled WGS sequence"/>
</dbReference>
<dbReference type="GO" id="GO:0005576">
    <property type="term" value="C:extracellular region"/>
    <property type="evidence" value="ECO:0007669"/>
    <property type="project" value="UniProtKB-SubCell"/>
</dbReference>
<dbReference type="GO" id="GO:0004519">
    <property type="term" value="F:endonuclease activity"/>
    <property type="evidence" value="ECO:0007669"/>
    <property type="project" value="UniProtKB-KW"/>
</dbReference>
<dbReference type="GO" id="GO:0003676">
    <property type="term" value="F:nucleic acid binding"/>
    <property type="evidence" value="ECO:0007669"/>
    <property type="project" value="InterPro"/>
</dbReference>
<dbReference type="GO" id="GO:0004540">
    <property type="term" value="F:RNA nuclease activity"/>
    <property type="evidence" value="ECO:0000318"/>
    <property type="project" value="GO_Central"/>
</dbReference>
<dbReference type="GO" id="GO:0050830">
    <property type="term" value="P:defense response to Gram-positive bacterium"/>
    <property type="evidence" value="ECO:0000318"/>
    <property type="project" value="GO_Central"/>
</dbReference>
<dbReference type="CDD" id="cd06265">
    <property type="entry name" value="RNase_A_canonical"/>
    <property type="match status" value="1"/>
</dbReference>
<dbReference type="FunFam" id="3.10.130.10:FF:000008">
    <property type="entry name" value="Liver ribonuclease A"/>
    <property type="match status" value="1"/>
</dbReference>
<dbReference type="Gene3D" id="3.10.130.10">
    <property type="entry name" value="Ribonuclease A-like domain"/>
    <property type="match status" value="1"/>
</dbReference>
<dbReference type="InterPro" id="IPR001427">
    <property type="entry name" value="RNaseA"/>
</dbReference>
<dbReference type="InterPro" id="IPR036816">
    <property type="entry name" value="RNaseA-like_dom_sf"/>
</dbReference>
<dbReference type="InterPro" id="IPR023411">
    <property type="entry name" value="RNaseA_AS"/>
</dbReference>
<dbReference type="InterPro" id="IPR023412">
    <property type="entry name" value="RNaseA_domain"/>
</dbReference>
<dbReference type="PANTHER" id="PTHR11437:SF10">
    <property type="entry name" value="ANGIOGENIN-RELATED"/>
    <property type="match status" value="1"/>
</dbReference>
<dbReference type="PANTHER" id="PTHR11437">
    <property type="entry name" value="RIBONUCLEASE"/>
    <property type="match status" value="1"/>
</dbReference>
<dbReference type="Pfam" id="PF00074">
    <property type="entry name" value="RnaseA"/>
    <property type="match status" value="1"/>
</dbReference>
<dbReference type="PRINTS" id="PR00794">
    <property type="entry name" value="RIBONUCLEASE"/>
</dbReference>
<dbReference type="SMART" id="SM00092">
    <property type="entry name" value="RNAse_Pc"/>
    <property type="match status" value="1"/>
</dbReference>
<dbReference type="SUPFAM" id="SSF54076">
    <property type="entry name" value="RNase A-like"/>
    <property type="match status" value="1"/>
</dbReference>
<dbReference type="PROSITE" id="PS00127">
    <property type="entry name" value="RNASE_PANCREATIC"/>
    <property type="match status" value="1"/>
</dbReference>